<proteinExistence type="inferred from homology"/>
<evidence type="ECO:0000255" key="1">
    <source>
        <dbReference type="HAMAP-Rule" id="MF_00056"/>
    </source>
</evidence>
<gene>
    <name evidence="1" type="primary">kdsA</name>
    <name type="ordered locus">Bmul_1162</name>
    <name type="ordered locus">BMULJ_02092</name>
</gene>
<sequence>MKLCDFEVGLDKPFFLIAGTCVVESEQMTIDTAGRLKEICAKLNIPFIYKSSYDKANRSSGKSFRGLGMDEGLRILSEVKRQLGLPVLTDVHSIDEIEQVASVVDVLQTPAFLCRQTDFIHACARSGKPVNIKKGQFLAPHDMKNVIDKARDAAREAGLSEDRFMACERGVSFGYNNLVSDMRSLAIMRETNAPVVFDATHSVQLPGGQGTSSGGQREFVPVLARAAVATGVAGLFMETHPNPAEAKSDGPNAVPLNRMSALLETLVTLDQAVKRGPFLENDFN</sequence>
<dbReference type="EC" id="2.5.1.55" evidence="1"/>
<dbReference type="EMBL" id="CP000868">
    <property type="protein sequence ID" value="ABX14852.1"/>
    <property type="molecule type" value="Genomic_DNA"/>
</dbReference>
<dbReference type="EMBL" id="AP009385">
    <property type="protein sequence ID" value="BAG43999.1"/>
    <property type="molecule type" value="Genomic_DNA"/>
</dbReference>
<dbReference type="RefSeq" id="WP_006401936.1">
    <property type="nucleotide sequence ID" value="NC_010804.1"/>
</dbReference>
<dbReference type="SMR" id="A9AGW1"/>
<dbReference type="STRING" id="395019.BMULJ_02092"/>
<dbReference type="GeneID" id="89570637"/>
<dbReference type="KEGG" id="bmj:BMULJ_02092"/>
<dbReference type="KEGG" id="bmu:Bmul_1162"/>
<dbReference type="eggNOG" id="COG2877">
    <property type="taxonomic scope" value="Bacteria"/>
</dbReference>
<dbReference type="HOGENOM" id="CLU_036666_0_0_4"/>
<dbReference type="UniPathway" id="UPA00030"/>
<dbReference type="UniPathway" id="UPA00357">
    <property type="reaction ID" value="UER00474"/>
</dbReference>
<dbReference type="Proteomes" id="UP000008815">
    <property type="component" value="Chromosome 1"/>
</dbReference>
<dbReference type="GO" id="GO:0005737">
    <property type="term" value="C:cytoplasm"/>
    <property type="evidence" value="ECO:0007669"/>
    <property type="project" value="UniProtKB-SubCell"/>
</dbReference>
<dbReference type="GO" id="GO:0008676">
    <property type="term" value="F:3-deoxy-8-phosphooctulonate synthase activity"/>
    <property type="evidence" value="ECO:0007669"/>
    <property type="project" value="UniProtKB-UniRule"/>
</dbReference>
<dbReference type="GO" id="GO:0019294">
    <property type="term" value="P:keto-3-deoxy-D-manno-octulosonic acid biosynthetic process"/>
    <property type="evidence" value="ECO:0007669"/>
    <property type="project" value="UniProtKB-UniRule"/>
</dbReference>
<dbReference type="Gene3D" id="3.20.20.70">
    <property type="entry name" value="Aldolase class I"/>
    <property type="match status" value="1"/>
</dbReference>
<dbReference type="HAMAP" id="MF_00056">
    <property type="entry name" value="KDO8P_synth"/>
    <property type="match status" value="1"/>
</dbReference>
<dbReference type="InterPro" id="IPR013785">
    <property type="entry name" value="Aldolase_TIM"/>
</dbReference>
<dbReference type="InterPro" id="IPR006218">
    <property type="entry name" value="DAHP1/KDSA"/>
</dbReference>
<dbReference type="InterPro" id="IPR006269">
    <property type="entry name" value="KDO8P_synthase"/>
</dbReference>
<dbReference type="NCBIfam" id="TIGR01362">
    <property type="entry name" value="KDO8P_synth"/>
    <property type="match status" value="1"/>
</dbReference>
<dbReference type="NCBIfam" id="NF003543">
    <property type="entry name" value="PRK05198.1"/>
    <property type="match status" value="1"/>
</dbReference>
<dbReference type="PANTHER" id="PTHR21057">
    <property type="entry name" value="PHOSPHO-2-DEHYDRO-3-DEOXYHEPTONATE ALDOLASE"/>
    <property type="match status" value="1"/>
</dbReference>
<dbReference type="Pfam" id="PF00793">
    <property type="entry name" value="DAHP_synth_1"/>
    <property type="match status" value="1"/>
</dbReference>
<dbReference type="SUPFAM" id="SSF51569">
    <property type="entry name" value="Aldolase"/>
    <property type="match status" value="1"/>
</dbReference>
<reference key="1">
    <citation type="submission" date="2007-10" db="EMBL/GenBank/DDBJ databases">
        <title>Complete sequence of chromosome 1 of Burkholderia multivorans ATCC 17616.</title>
        <authorList>
            <person name="Copeland A."/>
            <person name="Lucas S."/>
            <person name="Lapidus A."/>
            <person name="Barry K."/>
            <person name="Glavina del Rio T."/>
            <person name="Dalin E."/>
            <person name="Tice H."/>
            <person name="Pitluck S."/>
            <person name="Chain P."/>
            <person name="Malfatti S."/>
            <person name="Shin M."/>
            <person name="Vergez L."/>
            <person name="Schmutz J."/>
            <person name="Larimer F."/>
            <person name="Land M."/>
            <person name="Hauser L."/>
            <person name="Kyrpides N."/>
            <person name="Kim E."/>
            <person name="Tiedje J."/>
            <person name="Richardson P."/>
        </authorList>
    </citation>
    <scope>NUCLEOTIDE SEQUENCE [LARGE SCALE GENOMIC DNA]</scope>
    <source>
        <strain>ATCC 17616 / 249</strain>
    </source>
</reference>
<reference key="2">
    <citation type="submission" date="2007-04" db="EMBL/GenBank/DDBJ databases">
        <title>Complete genome sequence of Burkholderia multivorans ATCC 17616.</title>
        <authorList>
            <person name="Ohtsubo Y."/>
            <person name="Yamashita A."/>
            <person name="Kurokawa K."/>
            <person name="Takami H."/>
            <person name="Yuhara S."/>
            <person name="Nishiyama E."/>
            <person name="Endo R."/>
            <person name="Miyazaki R."/>
            <person name="Ono A."/>
            <person name="Yano K."/>
            <person name="Ito M."/>
            <person name="Sota M."/>
            <person name="Yuji N."/>
            <person name="Hattori M."/>
            <person name="Tsuda M."/>
        </authorList>
    </citation>
    <scope>NUCLEOTIDE SEQUENCE [LARGE SCALE GENOMIC DNA]</scope>
    <source>
        <strain>ATCC 17616 / 249</strain>
    </source>
</reference>
<comment type="catalytic activity">
    <reaction evidence="1">
        <text>D-arabinose 5-phosphate + phosphoenolpyruvate + H2O = 3-deoxy-alpha-D-manno-2-octulosonate-8-phosphate + phosphate</text>
        <dbReference type="Rhea" id="RHEA:14053"/>
        <dbReference type="ChEBI" id="CHEBI:15377"/>
        <dbReference type="ChEBI" id="CHEBI:43474"/>
        <dbReference type="ChEBI" id="CHEBI:57693"/>
        <dbReference type="ChEBI" id="CHEBI:58702"/>
        <dbReference type="ChEBI" id="CHEBI:85985"/>
        <dbReference type="EC" id="2.5.1.55"/>
    </reaction>
</comment>
<comment type="pathway">
    <text evidence="1">Carbohydrate biosynthesis; 3-deoxy-D-manno-octulosonate biosynthesis; 3-deoxy-D-manno-octulosonate from D-ribulose 5-phosphate: step 2/3.</text>
</comment>
<comment type="pathway">
    <text evidence="1">Bacterial outer membrane biogenesis; lipopolysaccharide biosynthesis.</text>
</comment>
<comment type="subcellular location">
    <subcellularLocation>
        <location evidence="1">Cytoplasm</location>
    </subcellularLocation>
</comment>
<comment type="similarity">
    <text evidence="1">Belongs to the KdsA family.</text>
</comment>
<name>KDSA_BURM1</name>
<accession>A9AGW1</accession>
<organism>
    <name type="scientific">Burkholderia multivorans (strain ATCC 17616 / 249)</name>
    <dbReference type="NCBI Taxonomy" id="395019"/>
    <lineage>
        <taxon>Bacteria</taxon>
        <taxon>Pseudomonadati</taxon>
        <taxon>Pseudomonadota</taxon>
        <taxon>Betaproteobacteria</taxon>
        <taxon>Burkholderiales</taxon>
        <taxon>Burkholderiaceae</taxon>
        <taxon>Burkholderia</taxon>
        <taxon>Burkholderia cepacia complex</taxon>
    </lineage>
</organism>
<feature type="chain" id="PRO_1000091802" description="2-dehydro-3-deoxyphosphooctonate aldolase">
    <location>
        <begin position="1"/>
        <end position="284"/>
    </location>
</feature>
<protein>
    <recommendedName>
        <fullName evidence="1">2-dehydro-3-deoxyphosphooctonate aldolase</fullName>
        <ecNumber evidence="1">2.5.1.55</ecNumber>
    </recommendedName>
    <alternativeName>
        <fullName evidence="1">3-deoxy-D-manno-octulosonic acid 8-phosphate synthase</fullName>
    </alternativeName>
    <alternativeName>
        <fullName evidence="1">KDO-8-phosphate synthase</fullName>
        <shortName evidence="1">KDO 8-P synthase</shortName>
        <shortName evidence="1">KDOPS</shortName>
    </alternativeName>
    <alternativeName>
        <fullName evidence="1">Phospho-2-dehydro-3-deoxyoctonate aldolase</fullName>
    </alternativeName>
</protein>
<keyword id="KW-0963">Cytoplasm</keyword>
<keyword id="KW-0448">Lipopolysaccharide biosynthesis</keyword>
<keyword id="KW-1185">Reference proteome</keyword>
<keyword id="KW-0808">Transferase</keyword>